<name>JZT58_CHIGU</name>
<comment type="function">
    <text>Probable ion channel inhibitor.</text>
</comment>
<comment type="subcellular location">
    <subcellularLocation>
        <location evidence="1">Secreted</location>
    </subcellularLocation>
</comment>
<comment type="tissue specificity">
    <text>Expressed by the venom gland.</text>
</comment>
<comment type="domain">
    <text evidence="1">The presence of a 'disulfide through disulfide knot' structurally defines this protein as a knottin.</text>
</comment>
<comment type="similarity">
    <text>Belongs to the neurotoxin 14 (magi-1) family. OAIP-1 subfamily.</text>
</comment>
<feature type="signal peptide" evidence="2">
    <location>
        <begin position="1"/>
        <end position="22"/>
    </location>
</feature>
<feature type="propeptide" id="PRO_0000398530" evidence="1">
    <location>
        <begin position="23"/>
        <end position="58"/>
    </location>
</feature>
<feature type="peptide" id="PRO_0000398531" description="U27-theraphotoxin-Cg1a">
    <location>
        <begin position="59"/>
        <end position="94"/>
    </location>
</feature>
<feature type="disulfide bond" evidence="1">
    <location>
        <begin position="60"/>
        <end position="78"/>
    </location>
</feature>
<feature type="disulfide bond" evidence="1">
    <location>
        <begin position="67"/>
        <end position="83"/>
    </location>
</feature>
<feature type="disulfide bond" evidence="1">
    <location>
        <begin position="77"/>
        <end position="88"/>
    </location>
</feature>
<accession>B1P1H8</accession>
<protein>
    <recommendedName>
        <fullName>U27-theraphotoxin-Cg1a</fullName>
        <shortName>U27-TRTX-Cg1a</shortName>
    </recommendedName>
    <alternativeName>
        <fullName>Jingzhaotoxin-58</fullName>
        <shortName>JZTX-58</shortName>
    </alternativeName>
</protein>
<evidence type="ECO:0000250" key="1"/>
<evidence type="ECO:0000255" key="2"/>
<organism>
    <name type="scientific">Chilobrachys guangxiensis</name>
    <name type="common">Chinese earth tiger tarantula</name>
    <name type="synonym">Chilobrachys jingzhao</name>
    <dbReference type="NCBI Taxonomy" id="278060"/>
    <lineage>
        <taxon>Eukaryota</taxon>
        <taxon>Metazoa</taxon>
        <taxon>Ecdysozoa</taxon>
        <taxon>Arthropoda</taxon>
        <taxon>Chelicerata</taxon>
        <taxon>Arachnida</taxon>
        <taxon>Araneae</taxon>
        <taxon>Mygalomorphae</taxon>
        <taxon>Theraphosidae</taxon>
        <taxon>Chilobrachys</taxon>
    </lineage>
</organism>
<dbReference type="EMBL" id="EU233909">
    <property type="protein sequence ID" value="ABY71728.1"/>
    <property type="molecule type" value="mRNA"/>
</dbReference>
<dbReference type="SMR" id="B1P1H8"/>
<dbReference type="ArachnoServer" id="AS000857">
    <property type="toxin name" value="U27-theraphotoxin-Cg1a"/>
</dbReference>
<dbReference type="GO" id="GO:0005576">
    <property type="term" value="C:extracellular region"/>
    <property type="evidence" value="ECO:0007669"/>
    <property type="project" value="UniProtKB-SubCell"/>
</dbReference>
<dbReference type="GO" id="GO:0099106">
    <property type="term" value="F:ion channel regulator activity"/>
    <property type="evidence" value="ECO:0007669"/>
    <property type="project" value="UniProtKB-KW"/>
</dbReference>
<dbReference type="GO" id="GO:0090729">
    <property type="term" value="F:toxin activity"/>
    <property type="evidence" value="ECO:0007669"/>
    <property type="project" value="UniProtKB-KW"/>
</dbReference>
<keyword id="KW-1015">Disulfide bond</keyword>
<keyword id="KW-0872">Ion channel impairing toxin</keyword>
<keyword id="KW-0960">Knottin</keyword>
<keyword id="KW-0964">Secreted</keyword>
<keyword id="KW-0732">Signal</keyword>
<keyword id="KW-0800">Toxin</keyword>
<reference key="1">
    <citation type="journal article" date="2008" name="Cell. Mol. Life Sci.">
        <title>Molecular diversity and evolution of cystine knot toxins of the tarantula Chilobrachys jingzhao.</title>
        <authorList>
            <person name="Chen J."/>
            <person name="Deng M."/>
            <person name="He Q."/>
            <person name="Meng E."/>
            <person name="Jiang L."/>
            <person name="Liao Z."/>
            <person name="Rong M."/>
            <person name="Liang S."/>
        </authorList>
    </citation>
    <scope>NUCLEOTIDE SEQUENCE [LARGE SCALE MRNA]</scope>
    <source>
        <tissue>Venom gland</tissue>
    </source>
</reference>
<proteinExistence type="evidence at transcript level"/>
<sequence>MIFLLPPVIFVMLLAESVLILGDSEDADLMEMVQMSRPFFNPIIPAVEFVDLREERQRACGHLHDPCPNDRPGHRTCCIGLQCRYGSCLVQVGR</sequence>